<gene>
    <name evidence="1 3" type="primary">murC</name>
    <name type="ordered locus">SAOUHSC_01856</name>
</gene>
<accession>Q2FXJ0</accession>
<keyword id="KW-0067">ATP-binding</keyword>
<keyword id="KW-0131">Cell cycle</keyword>
<keyword id="KW-0132">Cell division</keyword>
<keyword id="KW-0133">Cell shape</keyword>
<keyword id="KW-0961">Cell wall biogenesis/degradation</keyword>
<keyword id="KW-0963">Cytoplasm</keyword>
<keyword id="KW-0436">Ligase</keyword>
<keyword id="KW-0547">Nucleotide-binding</keyword>
<keyword id="KW-0573">Peptidoglycan synthesis</keyword>
<keyword id="KW-1185">Reference proteome</keyword>
<sequence length="437" mass="49188">MTHYHFVGIKGSGMSSLAQIMHDLGHEVQGSDIENYVFTEVALRNKGIKILPFDANNIKEDMVVIQGNAFASSHEEIVRAHQLKLDVVSYNDFLGQIIDQYTSVAVTGAHGKTSTTGLLSHVMNGDKKTSFLIGDGTGMGLPESDYFAFEACEYRRHFLSYKPDYAIMTNIDFDHPDYFKDINDVFDAFQEMAHNVKKGIIAWGDDEHLRKIEADVPIYYYGFKDSDDIYAQNIQITDKGTAFDVYVDGEFYDHFLSPQYGDHTVLNALAVIAISYLEKLDVTNIKEALETFGGVKRRFNETTIANQVIVDDYAHHPREISATIETARKKYPHKEVVAVFQPHTFSRTQAFLNEFAESLSKADRVFLCEIFGSIRENTGALTIQDLIDKIEGASLINEDSINVLEQFDNAVILFMGAGDIQKLQNAYLDKLGMKNAF</sequence>
<proteinExistence type="evidence at protein level"/>
<reference key="1">
    <citation type="book" date="2006" name="Gram positive pathogens, 2nd edition">
        <title>The Staphylococcus aureus NCTC 8325 genome.</title>
        <editorList>
            <person name="Fischetti V."/>
            <person name="Novick R."/>
            <person name="Ferretti J."/>
            <person name="Portnoy D."/>
            <person name="Rood J."/>
        </editorList>
        <authorList>
            <person name="Gillaspy A.F."/>
            <person name="Worrell V."/>
            <person name="Orvis J."/>
            <person name="Roe B.A."/>
            <person name="Dyer D.W."/>
            <person name="Iandolo J.J."/>
        </authorList>
    </citation>
    <scope>NUCLEOTIDE SEQUENCE [LARGE SCALE GENOMIC DNA]</scope>
    <source>
        <strain>NCTC 8325 / PS 47</strain>
    </source>
</reference>
<reference key="2">
    <citation type="journal article" date="2010" name="Biochimie">
        <title>Purification and biochemical characterization of Mur ligases from Staphylococcus aureus.</title>
        <authorList>
            <person name="Patin D."/>
            <person name="Boniface A."/>
            <person name="Kovac A."/>
            <person name="Herve M."/>
            <person name="Dementin S."/>
            <person name="Barreteau H."/>
            <person name="Mengin-Lecreulx D."/>
            <person name="Blanot D."/>
        </authorList>
    </citation>
    <scope>FUNCTION</scope>
    <scope>CATALYTIC ACTIVITY</scope>
    <scope>BIOPHYSICOCHEMICAL PROPERTIES</scope>
    <source>
        <strain>NCTC 8325 / PS 47</strain>
    </source>
</reference>
<comment type="function">
    <text evidence="2">Cell wall formation (PubMed:20659527). Can also use L-serine and glycine, but they are incorporated 4.3- and 7-fold less rapidly, respectively, than L-alanine (PubMed:20659527).</text>
</comment>
<comment type="catalytic activity">
    <reaction evidence="1 2">
        <text>UDP-N-acetyl-alpha-D-muramate + L-alanine + ATP = UDP-N-acetyl-alpha-D-muramoyl-L-alanine + ADP + phosphate + H(+)</text>
        <dbReference type="Rhea" id="RHEA:23372"/>
        <dbReference type="ChEBI" id="CHEBI:15378"/>
        <dbReference type="ChEBI" id="CHEBI:30616"/>
        <dbReference type="ChEBI" id="CHEBI:43474"/>
        <dbReference type="ChEBI" id="CHEBI:57972"/>
        <dbReference type="ChEBI" id="CHEBI:70757"/>
        <dbReference type="ChEBI" id="CHEBI:83898"/>
        <dbReference type="ChEBI" id="CHEBI:456216"/>
        <dbReference type="EC" id="6.3.2.8"/>
    </reaction>
</comment>
<comment type="biophysicochemical properties">
    <kinetics>
        <KM evidence="2">0.28 mM for UDP-MurNAc</KM>
        <KM evidence="2">0.44 mM for L-alanine</KM>
        <KM evidence="2">2 mM for ATP</KM>
        <Vmax evidence="2">2.9 umol/min/mg enzyme</Vmax>
    </kinetics>
    <phDependence>
        <text evidence="2">Optimum pH is 8.2-8.8.</text>
    </phDependence>
</comment>
<comment type="pathway">
    <text evidence="1">Cell wall biogenesis; peptidoglycan biosynthesis.</text>
</comment>
<comment type="subcellular location">
    <subcellularLocation>
        <location evidence="1">Cytoplasm</location>
    </subcellularLocation>
</comment>
<comment type="similarity">
    <text evidence="1">Belongs to the MurCDEF family.</text>
</comment>
<organism>
    <name type="scientific">Staphylococcus aureus (strain NCTC 8325 / PS 47)</name>
    <dbReference type="NCBI Taxonomy" id="93061"/>
    <lineage>
        <taxon>Bacteria</taxon>
        <taxon>Bacillati</taxon>
        <taxon>Bacillota</taxon>
        <taxon>Bacilli</taxon>
        <taxon>Bacillales</taxon>
        <taxon>Staphylococcaceae</taxon>
        <taxon>Staphylococcus</taxon>
    </lineage>
</organism>
<feature type="chain" id="PRO_1000004419" description="UDP-N-acetylmuramate--L-alanine ligase">
    <location>
        <begin position="1"/>
        <end position="437"/>
    </location>
</feature>
<feature type="binding site" evidence="1">
    <location>
        <begin position="108"/>
        <end position="114"/>
    </location>
    <ligand>
        <name>ATP</name>
        <dbReference type="ChEBI" id="CHEBI:30616"/>
    </ligand>
</feature>
<evidence type="ECO:0000255" key="1">
    <source>
        <dbReference type="HAMAP-Rule" id="MF_00046"/>
    </source>
</evidence>
<evidence type="ECO:0000269" key="2">
    <source>
    </source>
</evidence>
<evidence type="ECO:0000303" key="3">
    <source>
    </source>
</evidence>
<protein>
    <recommendedName>
        <fullName evidence="1">UDP-N-acetylmuramate--L-alanine ligase</fullName>
        <ecNumber evidence="1 2">6.3.2.8</ecNumber>
    </recommendedName>
    <alternativeName>
        <fullName evidence="1">UDP-N-acetylmuramoyl-L-alanine synthetase</fullName>
    </alternativeName>
</protein>
<dbReference type="EC" id="6.3.2.8" evidence="1 2"/>
<dbReference type="EMBL" id="CP000253">
    <property type="protein sequence ID" value="ABD30922.1"/>
    <property type="molecule type" value="Genomic_DNA"/>
</dbReference>
<dbReference type="RefSeq" id="WP_000150168.1">
    <property type="nucleotide sequence ID" value="NZ_LS483365.1"/>
</dbReference>
<dbReference type="RefSeq" id="YP_500360.1">
    <property type="nucleotide sequence ID" value="NC_007795.1"/>
</dbReference>
<dbReference type="SMR" id="Q2FXJ0"/>
<dbReference type="STRING" id="93061.SAOUHSC_01856"/>
<dbReference type="PaxDb" id="1280-SAXN108_1770"/>
<dbReference type="GeneID" id="3920534"/>
<dbReference type="KEGG" id="sao:SAOUHSC_01856"/>
<dbReference type="PATRIC" id="fig|93061.5.peg.1689"/>
<dbReference type="eggNOG" id="COG0773">
    <property type="taxonomic scope" value="Bacteria"/>
</dbReference>
<dbReference type="HOGENOM" id="CLU_028104_1_0_9"/>
<dbReference type="OrthoDB" id="9804126at2"/>
<dbReference type="UniPathway" id="UPA00219"/>
<dbReference type="PRO" id="PR:Q2FXJ0"/>
<dbReference type="Proteomes" id="UP000008816">
    <property type="component" value="Chromosome"/>
</dbReference>
<dbReference type="GO" id="GO:0005737">
    <property type="term" value="C:cytoplasm"/>
    <property type="evidence" value="ECO:0007669"/>
    <property type="project" value="UniProtKB-SubCell"/>
</dbReference>
<dbReference type="GO" id="GO:0005524">
    <property type="term" value="F:ATP binding"/>
    <property type="evidence" value="ECO:0007669"/>
    <property type="project" value="UniProtKB-UniRule"/>
</dbReference>
<dbReference type="GO" id="GO:0008763">
    <property type="term" value="F:UDP-N-acetylmuramate-L-alanine ligase activity"/>
    <property type="evidence" value="ECO:0007669"/>
    <property type="project" value="UniProtKB-UniRule"/>
</dbReference>
<dbReference type="GO" id="GO:0051301">
    <property type="term" value="P:cell division"/>
    <property type="evidence" value="ECO:0007669"/>
    <property type="project" value="UniProtKB-KW"/>
</dbReference>
<dbReference type="GO" id="GO:0071555">
    <property type="term" value="P:cell wall organization"/>
    <property type="evidence" value="ECO:0007669"/>
    <property type="project" value="UniProtKB-KW"/>
</dbReference>
<dbReference type="GO" id="GO:0009252">
    <property type="term" value="P:peptidoglycan biosynthetic process"/>
    <property type="evidence" value="ECO:0007669"/>
    <property type="project" value="UniProtKB-UniRule"/>
</dbReference>
<dbReference type="GO" id="GO:0008360">
    <property type="term" value="P:regulation of cell shape"/>
    <property type="evidence" value="ECO:0007669"/>
    <property type="project" value="UniProtKB-KW"/>
</dbReference>
<dbReference type="Gene3D" id="3.90.190.20">
    <property type="entry name" value="Mur ligase, C-terminal domain"/>
    <property type="match status" value="1"/>
</dbReference>
<dbReference type="Gene3D" id="3.40.1190.10">
    <property type="entry name" value="Mur-like, catalytic domain"/>
    <property type="match status" value="1"/>
</dbReference>
<dbReference type="Gene3D" id="3.40.50.720">
    <property type="entry name" value="NAD(P)-binding Rossmann-like Domain"/>
    <property type="match status" value="1"/>
</dbReference>
<dbReference type="HAMAP" id="MF_00046">
    <property type="entry name" value="MurC"/>
    <property type="match status" value="1"/>
</dbReference>
<dbReference type="InterPro" id="IPR036565">
    <property type="entry name" value="Mur-like_cat_sf"/>
</dbReference>
<dbReference type="InterPro" id="IPR004101">
    <property type="entry name" value="Mur_ligase_C"/>
</dbReference>
<dbReference type="InterPro" id="IPR036615">
    <property type="entry name" value="Mur_ligase_C_dom_sf"/>
</dbReference>
<dbReference type="InterPro" id="IPR013221">
    <property type="entry name" value="Mur_ligase_cen"/>
</dbReference>
<dbReference type="InterPro" id="IPR000713">
    <property type="entry name" value="Mur_ligase_N"/>
</dbReference>
<dbReference type="InterPro" id="IPR050061">
    <property type="entry name" value="MurCDEF_pg_biosynth"/>
</dbReference>
<dbReference type="InterPro" id="IPR005758">
    <property type="entry name" value="UDP-N-AcMur_Ala_ligase_MurC"/>
</dbReference>
<dbReference type="NCBIfam" id="TIGR01082">
    <property type="entry name" value="murC"/>
    <property type="match status" value="1"/>
</dbReference>
<dbReference type="PANTHER" id="PTHR43445:SF3">
    <property type="entry name" value="UDP-N-ACETYLMURAMATE--L-ALANINE LIGASE"/>
    <property type="match status" value="1"/>
</dbReference>
<dbReference type="PANTHER" id="PTHR43445">
    <property type="entry name" value="UDP-N-ACETYLMURAMATE--L-ALANINE LIGASE-RELATED"/>
    <property type="match status" value="1"/>
</dbReference>
<dbReference type="Pfam" id="PF01225">
    <property type="entry name" value="Mur_ligase"/>
    <property type="match status" value="1"/>
</dbReference>
<dbReference type="Pfam" id="PF02875">
    <property type="entry name" value="Mur_ligase_C"/>
    <property type="match status" value="1"/>
</dbReference>
<dbReference type="Pfam" id="PF08245">
    <property type="entry name" value="Mur_ligase_M"/>
    <property type="match status" value="1"/>
</dbReference>
<dbReference type="SUPFAM" id="SSF51984">
    <property type="entry name" value="MurCD N-terminal domain"/>
    <property type="match status" value="1"/>
</dbReference>
<dbReference type="SUPFAM" id="SSF53623">
    <property type="entry name" value="MurD-like peptide ligases, catalytic domain"/>
    <property type="match status" value="1"/>
</dbReference>
<dbReference type="SUPFAM" id="SSF53244">
    <property type="entry name" value="MurD-like peptide ligases, peptide-binding domain"/>
    <property type="match status" value="1"/>
</dbReference>
<name>MURC_STAA8</name>